<accession>P47330</accession>
<gene>
    <name evidence="1" type="primary">tilS</name>
    <name type="ordered locus">MG084</name>
</gene>
<evidence type="ECO:0000255" key="1">
    <source>
        <dbReference type="HAMAP-Rule" id="MF_01161"/>
    </source>
</evidence>
<reference key="1">
    <citation type="journal article" date="1995" name="Science">
        <title>The minimal gene complement of Mycoplasma genitalium.</title>
        <authorList>
            <person name="Fraser C.M."/>
            <person name="Gocayne J.D."/>
            <person name="White O."/>
            <person name="Adams M.D."/>
            <person name="Clayton R.A."/>
            <person name="Fleischmann R.D."/>
            <person name="Bult C.J."/>
            <person name="Kerlavage A.R."/>
            <person name="Sutton G.G."/>
            <person name="Kelley J.M."/>
            <person name="Fritchman J.L."/>
            <person name="Weidman J.F."/>
            <person name="Small K.V."/>
            <person name="Sandusky M."/>
            <person name="Fuhrmann J.L."/>
            <person name="Nguyen D.T."/>
            <person name="Utterback T.R."/>
            <person name="Saudek D.M."/>
            <person name="Phillips C.A."/>
            <person name="Merrick J.M."/>
            <person name="Tomb J.-F."/>
            <person name="Dougherty B.A."/>
            <person name="Bott K.F."/>
            <person name="Hu P.-C."/>
            <person name="Lucier T.S."/>
            <person name="Peterson S.N."/>
            <person name="Smith H.O."/>
            <person name="Hutchison C.A. III"/>
            <person name="Venter J.C."/>
        </authorList>
    </citation>
    <scope>NUCLEOTIDE SEQUENCE [LARGE SCALE GENOMIC DNA]</scope>
    <source>
        <strain>ATCC 33530 / DSM 19775 / NCTC 10195 / G37</strain>
    </source>
</reference>
<reference key="2">
    <citation type="journal article" date="1993" name="J. Bacteriol.">
        <title>A survey of the Mycoplasma genitalium genome by using random sequencing.</title>
        <authorList>
            <person name="Peterson S.N."/>
            <person name="Hu P.-C."/>
            <person name="Bott K.F."/>
            <person name="Hutchison C.A. III"/>
        </authorList>
    </citation>
    <scope>NUCLEOTIDE SEQUENCE [GENOMIC DNA] OF 266-290</scope>
    <source>
        <strain>ATCC 33530 / DSM 19775 / NCTC 10195 / G37</strain>
    </source>
</reference>
<protein>
    <recommendedName>
        <fullName evidence="1">tRNA(Ile)-lysidine synthase</fullName>
        <ecNumber evidence="1">6.3.4.19</ecNumber>
    </recommendedName>
    <alternativeName>
        <fullName evidence="1">tRNA(Ile)-2-lysyl-cytidine synthase</fullName>
    </alternativeName>
    <alternativeName>
        <fullName evidence="1">tRNA(Ile)-lysidine synthetase</fullName>
    </alternativeName>
</protein>
<comment type="function">
    <text evidence="1">Ligates lysine onto the cytidine present at position 34 of the AUA codon-specific tRNA(Ile) that contains the anticodon CAU, in an ATP-dependent manner. Cytidine is converted to lysidine, thus changing the amino acid specificity of the tRNA from methionine to isoleucine.</text>
</comment>
<comment type="catalytic activity">
    <reaction evidence="1">
        <text>cytidine(34) in tRNA(Ile2) + L-lysine + ATP = lysidine(34) in tRNA(Ile2) + AMP + diphosphate + H(+)</text>
        <dbReference type="Rhea" id="RHEA:43744"/>
        <dbReference type="Rhea" id="RHEA-COMP:10625"/>
        <dbReference type="Rhea" id="RHEA-COMP:10670"/>
        <dbReference type="ChEBI" id="CHEBI:15378"/>
        <dbReference type="ChEBI" id="CHEBI:30616"/>
        <dbReference type="ChEBI" id="CHEBI:32551"/>
        <dbReference type="ChEBI" id="CHEBI:33019"/>
        <dbReference type="ChEBI" id="CHEBI:82748"/>
        <dbReference type="ChEBI" id="CHEBI:83665"/>
        <dbReference type="ChEBI" id="CHEBI:456215"/>
        <dbReference type="EC" id="6.3.4.19"/>
    </reaction>
</comment>
<comment type="subcellular location">
    <subcellularLocation>
        <location evidence="1">Cytoplasm</location>
    </subcellularLocation>
</comment>
<comment type="domain">
    <text>The N-terminal region contains the highly conserved SGGXDS motif, predicted to be a P-loop motif involved in ATP binding.</text>
</comment>
<comment type="similarity">
    <text evidence="1">Belongs to the tRNA(Ile)-lysidine synthase family.</text>
</comment>
<organism>
    <name type="scientific">Mycoplasma genitalium (strain ATCC 33530 / DSM 19775 / NCTC 10195 / G37)</name>
    <name type="common">Mycoplasmoides genitalium</name>
    <dbReference type="NCBI Taxonomy" id="243273"/>
    <lineage>
        <taxon>Bacteria</taxon>
        <taxon>Bacillati</taxon>
        <taxon>Mycoplasmatota</taxon>
        <taxon>Mycoplasmoidales</taxon>
        <taxon>Mycoplasmoidaceae</taxon>
        <taxon>Mycoplasmoides</taxon>
    </lineage>
</organism>
<keyword id="KW-0067">ATP-binding</keyword>
<keyword id="KW-0963">Cytoplasm</keyword>
<keyword id="KW-0436">Ligase</keyword>
<keyword id="KW-0547">Nucleotide-binding</keyword>
<keyword id="KW-1185">Reference proteome</keyword>
<keyword id="KW-0819">tRNA processing</keyword>
<feature type="chain" id="PRO_0000181727" description="tRNA(Ile)-lysidine synthase">
    <location>
        <begin position="1"/>
        <end position="290"/>
    </location>
</feature>
<feature type="binding site" evidence="1">
    <location>
        <begin position="12"/>
        <end position="17"/>
    </location>
    <ligand>
        <name>ATP</name>
        <dbReference type="ChEBI" id="CHEBI:30616"/>
    </ligand>
</feature>
<proteinExistence type="inferred from homology"/>
<dbReference type="EC" id="6.3.4.19" evidence="1"/>
<dbReference type="EMBL" id="L43967">
    <property type="protein sequence ID" value="AAC71302.1"/>
    <property type="molecule type" value="Genomic_DNA"/>
</dbReference>
<dbReference type="EMBL" id="U01783">
    <property type="protein sequence ID" value="AAD10603.1"/>
    <property type="molecule type" value="Genomic_DNA"/>
</dbReference>
<dbReference type="PIR" id="C64209">
    <property type="entry name" value="C64209"/>
</dbReference>
<dbReference type="RefSeq" id="WP_010869324.1">
    <property type="nucleotide sequence ID" value="NC_000908.2"/>
</dbReference>
<dbReference type="SMR" id="P47330"/>
<dbReference type="STRING" id="243273.MG_084"/>
<dbReference type="GeneID" id="88282207"/>
<dbReference type="KEGG" id="mge:MG_084"/>
<dbReference type="eggNOG" id="COG0037">
    <property type="taxonomic scope" value="Bacteria"/>
</dbReference>
<dbReference type="HOGENOM" id="CLU_018869_0_2_14"/>
<dbReference type="InParanoid" id="P47330"/>
<dbReference type="OrthoDB" id="9807403at2"/>
<dbReference type="BioCyc" id="MGEN243273:G1GJ2-96-MONOMER"/>
<dbReference type="Proteomes" id="UP000000807">
    <property type="component" value="Chromosome"/>
</dbReference>
<dbReference type="GO" id="GO:0005737">
    <property type="term" value="C:cytoplasm"/>
    <property type="evidence" value="ECO:0007669"/>
    <property type="project" value="UniProtKB-SubCell"/>
</dbReference>
<dbReference type="GO" id="GO:0005524">
    <property type="term" value="F:ATP binding"/>
    <property type="evidence" value="ECO:0007669"/>
    <property type="project" value="UniProtKB-UniRule"/>
</dbReference>
<dbReference type="GO" id="GO:0032267">
    <property type="term" value="F:tRNA(Ile)-lysidine synthase activity"/>
    <property type="evidence" value="ECO:0007669"/>
    <property type="project" value="UniProtKB-EC"/>
</dbReference>
<dbReference type="GO" id="GO:0006400">
    <property type="term" value="P:tRNA modification"/>
    <property type="evidence" value="ECO:0007669"/>
    <property type="project" value="UniProtKB-UniRule"/>
</dbReference>
<dbReference type="CDD" id="cd01992">
    <property type="entry name" value="TilS_N"/>
    <property type="match status" value="1"/>
</dbReference>
<dbReference type="Gene3D" id="3.40.50.620">
    <property type="entry name" value="HUPs"/>
    <property type="match status" value="1"/>
</dbReference>
<dbReference type="HAMAP" id="MF_01161">
    <property type="entry name" value="tRNA_Ile_lys_synt"/>
    <property type="match status" value="1"/>
</dbReference>
<dbReference type="InterPro" id="IPR014729">
    <property type="entry name" value="Rossmann-like_a/b/a_fold"/>
</dbReference>
<dbReference type="InterPro" id="IPR011063">
    <property type="entry name" value="TilS/TtcA_N"/>
</dbReference>
<dbReference type="InterPro" id="IPR012094">
    <property type="entry name" value="tRNA_Ile_lys_synt"/>
</dbReference>
<dbReference type="InterPro" id="IPR012795">
    <property type="entry name" value="tRNA_Ile_lys_synt_N"/>
</dbReference>
<dbReference type="NCBIfam" id="TIGR02432">
    <property type="entry name" value="lysidine_TilS_N"/>
    <property type="match status" value="1"/>
</dbReference>
<dbReference type="PANTHER" id="PTHR43033">
    <property type="entry name" value="TRNA(ILE)-LYSIDINE SYNTHASE-RELATED"/>
    <property type="match status" value="1"/>
</dbReference>
<dbReference type="PANTHER" id="PTHR43033:SF1">
    <property type="entry name" value="TRNA(ILE)-LYSIDINE SYNTHASE-RELATED"/>
    <property type="match status" value="1"/>
</dbReference>
<dbReference type="Pfam" id="PF01171">
    <property type="entry name" value="ATP_bind_3"/>
    <property type="match status" value="1"/>
</dbReference>
<dbReference type="SUPFAM" id="SSF52402">
    <property type="entry name" value="Adenine nucleotide alpha hydrolases-like"/>
    <property type="match status" value="1"/>
</dbReference>
<name>TILS_MYCGE</name>
<sequence length="290" mass="34629">MASEKQYIAGVSGGSDSMLMLKLYQKKIACVVHVNYNTRSTSLRDQKLVEQYCQKLNIPLVVHTVDPDLVWKKNFQNQARKIRFDQFKKTAKLYQTNKLLLAHHRDDFIEQAKMQLDAKKRAVYYGIKTRCELYGLKIYRPLMKYWKDEIIALCRQDHIPYEIDETNKLPIYKRNEVRLEIEKWSKIEKEQFYIAICAMNKTIAQKLFVLMKKAKKWLLQPDVRELKRFSIIDQKQLIYSYLIYHKINVNGEKIDAILDFIQPSQQKQYRLQNDIFLMVKNQCLALLYKS</sequence>